<sequence length="269" mass="29090">MKNTFDPLRIGDKSFSSRLMLGTGKYRTSEDAINSIKKSECDIVTVAIRRLPTNINSDNISFLKSLDWEKLWLLPNTAGSQTAEDAIRMAFLGHELACQLGQEDNFFVKLEVISDPKYLLPDPIGTLKAAEFLVKKGFTVLPYINADPMLALHLEDLGCATVMPLGSPIGSGQGLNNLANLQIIIENANIPVIVDAGIGAPSEATMAMELGADGVLLNTAVAQSKNPEQMAFAMNLGVQSGRLGYLAGRMEKKQYANPSSPVSQISKIY</sequence>
<evidence type="ECO:0000255" key="1">
    <source>
        <dbReference type="HAMAP-Rule" id="MF_00443"/>
    </source>
</evidence>
<keyword id="KW-0150">Chloroplast</keyword>
<keyword id="KW-0934">Plastid</keyword>
<keyword id="KW-0704">Schiff base</keyword>
<keyword id="KW-0784">Thiamine biosynthesis</keyword>
<keyword id="KW-0808">Transferase</keyword>
<proteinExistence type="inferred from homology"/>
<geneLocation type="chloroplast"/>
<protein>
    <recommendedName>
        <fullName evidence="1">Thiazole synthase</fullName>
        <ecNumber evidence="1">2.8.1.10</ecNumber>
    </recommendedName>
</protein>
<name>THIG_THAPS</name>
<comment type="function">
    <text evidence="1">Catalyzes the rearrangement of 1-deoxy-D-xylulose 5-phosphate (DXP) to produce the thiazole phosphate moiety of thiamine. Sulfur is provided by the thiocarboxylate moiety of the carrier protein ThiS. In vitro, sulfur can be provided by H(2)S.</text>
</comment>
<comment type="catalytic activity">
    <reaction evidence="1">
        <text>[ThiS sulfur-carrier protein]-C-terminal-Gly-aminoethanethioate + 2-iminoacetate + 1-deoxy-D-xylulose 5-phosphate = [ThiS sulfur-carrier protein]-C-terminal Gly-Gly + 2-[(2R,5Z)-2-carboxy-4-methylthiazol-5(2H)-ylidene]ethyl phosphate + 2 H2O + H(+)</text>
        <dbReference type="Rhea" id="RHEA:26297"/>
        <dbReference type="Rhea" id="RHEA-COMP:12909"/>
        <dbReference type="Rhea" id="RHEA-COMP:19908"/>
        <dbReference type="ChEBI" id="CHEBI:15377"/>
        <dbReference type="ChEBI" id="CHEBI:15378"/>
        <dbReference type="ChEBI" id="CHEBI:57792"/>
        <dbReference type="ChEBI" id="CHEBI:62899"/>
        <dbReference type="ChEBI" id="CHEBI:77846"/>
        <dbReference type="ChEBI" id="CHEBI:90778"/>
        <dbReference type="ChEBI" id="CHEBI:232372"/>
        <dbReference type="EC" id="2.8.1.10"/>
    </reaction>
</comment>
<comment type="pathway">
    <text evidence="1">Cofactor biosynthesis; thiamine diphosphate biosynthesis.</text>
</comment>
<comment type="subunit">
    <text evidence="1">Homotetramer. Forms heterodimers with either ThiH or ThiS.</text>
</comment>
<comment type="subcellular location">
    <subcellularLocation>
        <location>Plastid</location>
        <location>Chloroplast</location>
    </subcellularLocation>
</comment>
<comment type="similarity">
    <text evidence="1">Belongs to the ThiG family.</text>
</comment>
<accession>A0T103</accession>
<gene>
    <name evidence="1" type="primary">thiG</name>
</gene>
<reference key="1">
    <citation type="journal article" date="2007" name="Mol. Genet. Genomics">
        <title>Chloroplast genomes of the diatoms Phaeodactylum tricornutum and Thalassiosira pseudonana: comparison with other plastid genomes of the red lineage.</title>
        <authorList>
            <person name="Oudot-Le Secq M.-P."/>
            <person name="Grimwood J."/>
            <person name="Shapiro H."/>
            <person name="Armbrust E.V."/>
            <person name="Bowler C."/>
            <person name="Green B.R."/>
        </authorList>
    </citation>
    <scope>NUCLEOTIDE SEQUENCE [LARGE SCALE GENOMIC DNA]</scope>
    <source>
        <strain>CCMP1335 / NEPCC58 / CCAP 1085/12</strain>
    </source>
</reference>
<organism>
    <name type="scientific">Thalassiosira pseudonana</name>
    <name type="common">Marine diatom</name>
    <name type="synonym">Cyclotella nana</name>
    <dbReference type="NCBI Taxonomy" id="35128"/>
    <lineage>
        <taxon>Eukaryota</taxon>
        <taxon>Sar</taxon>
        <taxon>Stramenopiles</taxon>
        <taxon>Ochrophyta</taxon>
        <taxon>Bacillariophyta</taxon>
        <taxon>Coscinodiscophyceae</taxon>
        <taxon>Thalassiosirophycidae</taxon>
        <taxon>Thalassiosirales</taxon>
        <taxon>Thalassiosiraceae</taxon>
        <taxon>Thalassiosira</taxon>
    </lineage>
</organism>
<dbReference type="EC" id="2.8.1.10" evidence="1"/>
<dbReference type="EMBL" id="EF067921">
    <property type="protein sequence ID" value="ABK20838.1"/>
    <property type="molecule type" value="Genomic_DNA"/>
</dbReference>
<dbReference type="RefSeq" id="YP_874615.1">
    <property type="nucleotide sequence ID" value="NC_008589.1"/>
</dbReference>
<dbReference type="SMR" id="A0T103"/>
<dbReference type="STRING" id="35128.A0T103"/>
<dbReference type="PaxDb" id="35128-Thapsdraft1620"/>
<dbReference type="GeneID" id="4524860"/>
<dbReference type="eggNOG" id="ENOG502RCR5">
    <property type="taxonomic scope" value="Eukaryota"/>
</dbReference>
<dbReference type="InParanoid" id="A0T103"/>
<dbReference type="OMA" id="PHNFQLI"/>
<dbReference type="UniPathway" id="UPA00060"/>
<dbReference type="GO" id="GO:1902508">
    <property type="term" value="C:2-iminoacetate synthase complex"/>
    <property type="evidence" value="ECO:0000318"/>
    <property type="project" value="GO_Central"/>
</dbReference>
<dbReference type="GO" id="GO:0009507">
    <property type="term" value="C:chloroplast"/>
    <property type="evidence" value="ECO:0007669"/>
    <property type="project" value="UniProtKB-SubCell"/>
</dbReference>
<dbReference type="GO" id="GO:1990107">
    <property type="term" value="F:thiazole synthase activity"/>
    <property type="evidence" value="ECO:0007669"/>
    <property type="project" value="UniProtKB-EC"/>
</dbReference>
<dbReference type="GO" id="GO:0009228">
    <property type="term" value="P:thiamine biosynthetic process"/>
    <property type="evidence" value="ECO:0000318"/>
    <property type="project" value="GO_Central"/>
</dbReference>
<dbReference type="GO" id="GO:0009229">
    <property type="term" value="P:thiamine diphosphate biosynthetic process"/>
    <property type="evidence" value="ECO:0000318"/>
    <property type="project" value="GO_Central"/>
</dbReference>
<dbReference type="CDD" id="cd04728">
    <property type="entry name" value="ThiG"/>
    <property type="match status" value="1"/>
</dbReference>
<dbReference type="Gene3D" id="3.20.20.70">
    <property type="entry name" value="Aldolase class I"/>
    <property type="match status" value="1"/>
</dbReference>
<dbReference type="HAMAP" id="MF_00443">
    <property type="entry name" value="ThiG"/>
    <property type="match status" value="1"/>
</dbReference>
<dbReference type="InterPro" id="IPR013785">
    <property type="entry name" value="Aldolase_TIM"/>
</dbReference>
<dbReference type="InterPro" id="IPR033983">
    <property type="entry name" value="Thiazole_synthase_ThiG"/>
</dbReference>
<dbReference type="InterPro" id="IPR008867">
    <property type="entry name" value="ThiG"/>
</dbReference>
<dbReference type="PANTHER" id="PTHR34266">
    <property type="entry name" value="THIAZOLE SYNTHASE"/>
    <property type="match status" value="1"/>
</dbReference>
<dbReference type="PANTHER" id="PTHR34266:SF2">
    <property type="entry name" value="THIAZOLE SYNTHASE"/>
    <property type="match status" value="1"/>
</dbReference>
<dbReference type="Pfam" id="PF05690">
    <property type="entry name" value="ThiG"/>
    <property type="match status" value="1"/>
</dbReference>
<dbReference type="SUPFAM" id="SSF110399">
    <property type="entry name" value="ThiG-like"/>
    <property type="match status" value="1"/>
</dbReference>
<feature type="chain" id="PRO_0000276567" description="Thiazole synthase">
    <location>
        <begin position="1"/>
        <end position="269"/>
    </location>
</feature>
<feature type="active site" description="Schiff-base intermediate with DXP" evidence="1">
    <location>
        <position position="109"/>
    </location>
</feature>
<feature type="binding site" evidence="1">
    <location>
        <position position="170"/>
    </location>
    <ligand>
        <name>1-deoxy-D-xylulose 5-phosphate</name>
        <dbReference type="ChEBI" id="CHEBI:57792"/>
    </ligand>
</feature>
<feature type="binding site" evidence="1">
    <location>
        <begin position="196"/>
        <end position="197"/>
    </location>
    <ligand>
        <name>1-deoxy-D-xylulose 5-phosphate</name>
        <dbReference type="ChEBI" id="CHEBI:57792"/>
    </ligand>
</feature>
<feature type="binding site" evidence="1">
    <location>
        <begin position="218"/>
        <end position="219"/>
    </location>
    <ligand>
        <name>1-deoxy-D-xylulose 5-phosphate</name>
        <dbReference type="ChEBI" id="CHEBI:57792"/>
    </ligand>
</feature>